<gene>
    <name evidence="12" type="primary">EPB1</name>
</gene>
<dbReference type="EC" id="3.4.22.-" evidence="4"/>
<dbReference type="EMBL" id="U19359">
    <property type="protein sequence ID" value="AAA85035.1"/>
    <property type="molecule type" value="Genomic_DNA"/>
</dbReference>
<dbReference type="PIR" id="JQ1111">
    <property type="entry name" value="JQ1111"/>
</dbReference>
<dbReference type="SMR" id="P25249"/>
<dbReference type="MEROPS" id="C01.024"/>
<dbReference type="GlyCosmos" id="P25249">
    <property type="glycosylation" value="1 site, No reported glycans"/>
</dbReference>
<dbReference type="GO" id="GO:0008234">
    <property type="term" value="F:cysteine-type peptidase activity"/>
    <property type="evidence" value="ECO:0007669"/>
    <property type="project" value="UniProtKB-KW"/>
</dbReference>
<dbReference type="GO" id="GO:0006508">
    <property type="term" value="P:proteolysis"/>
    <property type="evidence" value="ECO:0007669"/>
    <property type="project" value="UniProtKB-KW"/>
</dbReference>
<dbReference type="CDD" id="cd02248">
    <property type="entry name" value="Peptidase_C1A"/>
    <property type="match status" value="1"/>
</dbReference>
<dbReference type="FunFam" id="3.90.70.10:FF:000023">
    <property type="entry name" value="Senescence-specific cysteine protease SAG39"/>
    <property type="match status" value="1"/>
</dbReference>
<dbReference type="Gene3D" id="3.90.70.10">
    <property type="entry name" value="Cysteine proteinases"/>
    <property type="match status" value="1"/>
</dbReference>
<dbReference type="InterPro" id="IPR038765">
    <property type="entry name" value="Papain-like_cys_pep_sf"/>
</dbReference>
<dbReference type="InterPro" id="IPR025661">
    <property type="entry name" value="Pept_asp_AS"/>
</dbReference>
<dbReference type="InterPro" id="IPR000169">
    <property type="entry name" value="Pept_cys_AS"/>
</dbReference>
<dbReference type="InterPro" id="IPR025660">
    <property type="entry name" value="Pept_his_AS"/>
</dbReference>
<dbReference type="InterPro" id="IPR013128">
    <property type="entry name" value="Peptidase_C1A"/>
</dbReference>
<dbReference type="InterPro" id="IPR000668">
    <property type="entry name" value="Peptidase_C1A_C"/>
</dbReference>
<dbReference type="InterPro" id="IPR039417">
    <property type="entry name" value="Peptidase_C1A_papain-like"/>
</dbReference>
<dbReference type="InterPro" id="IPR013201">
    <property type="entry name" value="Prot_inhib_I29"/>
</dbReference>
<dbReference type="PANTHER" id="PTHR12411">
    <property type="entry name" value="CYSTEINE PROTEASE FAMILY C1-RELATED"/>
    <property type="match status" value="1"/>
</dbReference>
<dbReference type="Pfam" id="PF08246">
    <property type="entry name" value="Inhibitor_I29"/>
    <property type="match status" value="1"/>
</dbReference>
<dbReference type="Pfam" id="PF00112">
    <property type="entry name" value="Peptidase_C1"/>
    <property type="match status" value="1"/>
</dbReference>
<dbReference type="PRINTS" id="PR00705">
    <property type="entry name" value="PAPAIN"/>
</dbReference>
<dbReference type="SMART" id="SM00848">
    <property type="entry name" value="Inhibitor_I29"/>
    <property type="match status" value="1"/>
</dbReference>
<dbReference type="SMART" id="SM00645">
    <property type="entry name" value="Pept_C1"/>
    <property type="match status" value="1"/>
</dbReference>
<dbReference type="SUPFAM" id="SSF54001">
    <property type="entry name" value="Cysteine proteinases"/>
    <property type="match status" value="1"/>
</dbReference>
<dbReference type="PROSITE" id="PS00640">
    <property type="entry name" value="THIOL_PROTEASE_ASN"/>
    <property type="match status" value="1"/>
</dbReference>
<dbReference type="PROSITE" id="PS00139">
    <property type="entry name" value="THIOL_PROTEASE_CYS"/>
    <property type="match status" value="1"/>
</dbReference>
<dbReference type="PROSITE" id="PS00639">
    <property type="entry name" value="THIOL_PROTEASE_HIS"/>
    <property type="match status" value="1"/>
</dbReference>
<reference key="1">
    <citation type="journal article" date="1990" name="Plant Cell">
        <title>Hormonal regulation, processing, and secretion of cysteine proteinases in barley aleurone layers.</title>
        <authorList>
            <person name="Koehler S.M."/>
            <person name="Ho T.H.D."/>
        </authorList>
    </citation>
    <scope>NUCLEOTIDE SEQUENCE [GENOMIC DNA]</scope>
    <scope>INDUCTION BY GIBBERELLIC ACID</scope>
    <source>
        <strain>cv. Himalaya</strain>
        <tissue>Aleurone</tissue>
    </source>
</reference>
<reference key="2">
    <citation type="journal article" date="1996" name="Plant Mol. Biol.">
        <title>A major cysteine proteinase, EPB, in germinating barley seeds: structure of two intronless genes and regulation of expression.</title>
        <authorList>
            <person name="Mikkonen A.A."/>
            <person name="Porali I.K."/>
            <person name="Cercos M."/>
            <person name="Ho T.H.D."/>
        </authorList>
    </citation>
    <scope>NUCLEOTIDE SEQUENCE [GENOMIC DNA]</scope>
    <scope>INDUCTION BY GIBBERELLIC ACID</scope>
    <scope>REPRESSION BY ABSCISIC ACID</scope>
    <source>
        <strain>cv. Himalaya</strain>
    </source>
</reference>
<evidence type="ECO:0000250" key="1">
    <source>
        <dbReference type="UniProtKB" id="P00785"/>
    </source>
</evidence>
<evidence type="ECO:0000250" key="2">
    <source>
        <dbReference type="UniProtKB" id="P07858"/>
    </source>
</evidence>
<evidence type="ECO:0000250" key="3">
    <source>
        <dbReference type="UniProtKB" id="P25250"/>
    </source>
</evidence>
<evidence type="ECO:0000250" key="4">
    <source>
        <dbReference type="UniProtKB" id="P80884"/>
    </source>
</evidence>
<evidence type="ECO:0000255" key="5"/>
<evidence type="ECO:0000255" key="6">
    <source>
        <dbReference type="PROSITE-ProRule" id="PRU00498"/>
    </source>
</evidence>
<evidence type="ECO:0000255" key="7">
    <source>
        <dbReference type="PROSITE-ProRule" id="PRU10088"/>
    </source>
</evidence>
<evidence type="ECO:0000255" key="8">
    <source>
        <dbReference type="PROSITE-ProRule" id="PRU10089"/>
    </source>
</evidence>
<evidence type="ECO:0000255" key="9">
    <source>
        <dbReference type="PROSITE-ProRule" id="PRU10090"/>
    </source>
</evidence>
<evidence type="ECO:0000269" key="10">
    <source>
    </source>
</evidence>
<evidence type="ECO:0000269" key="11">
    <source>
    </source>
</evidence>
<evidence type="ECO:0000303" key="12">
    <source>
    </source>
</evidence>
<feature type="signal peptide" evidence="5">
    <location>
        <begin position="1"/>
        <end position="28"/>
    </location>
</feature>
<feature type="propeptide" id="PRO_0000026420" description="Activation peptide" evidence="1">
    <location>
        <begin position="29"/>
        <end position="133"/>
    </location>
</feature>
<feature type="chain" id="PRO_0000026421" description="Cysteine proteinase EP-B 1">
    <location>
        <begin position="134"/>
        <end position="371"/>
    </location>
</feature>
<feature type="active site" evidence="7">
    <location>
        <position position="158"/>
    </location>
</feature>
<feature type="active site" evidence="8">
    <location>
        <position position="297"/>
    </location>
</feature>
<feature type="active site" evidence="9">
    <location>
        <position position="318"/>
    </location>
</feature>
<feature type="glycosylation site" description="N-linked (GlcNAc...) asparagine" evidence="6">
    <location>
        <position position="130"/>
    </location>
</feature>
<feature type="disulfide bond" evidence="2">
    <location>
        <begin position="155"/>
        <end position="197"/>
    </location>
</feature>
<feature type="disulfide bond" evidence="3">
    <location>
        <begin position="189"/>
        <end position="230"/>
    </location>
</feature>
<feature type="disulfide bond" evidence="3">
    <location>
        <begin position="291"/>
        <end position="343"/>
    </location>
</feature>
<keyword id="KW-1015">Disulfide bond</keyword>
<keyword id="KW-0309">Germination</keyword>
<keyword id="KW-0325">Glycoprotein</keyword>
<keyword id="KW-0378">Hydrolase</keyword>
<keyword id="KW-0645">Protease</keyword>
<keyword id="KW-0732">Signal</keyword>
<keyword id="KW-0788">Thiol protease</keyword>
<keyword id="KW-0865">Zymogen</keyword>
<proteinExistence type="evidence at transcript level"/>
<accession>P25249</accession>
<sequence length="371" mass="40358">MGLLSKKLLVASMVAAVLAVAAVELCSAIPMEDKDLESEEALWDLYERWQSAHRVRRHHAEKHRRFGTFKSNAHFIHSHNKRGDHPYRLHLNRFGDMDQAEFRATFVGDLRRDTPAKPPSVPGFMYAALNVSDLPPSVDWRQKGAVTGVKDQGKCGSCWAFSTVVSVEGINAIRTGSLVSLSEQELIDCDTADNDGCQGGLMDNAFEYIKNNGGLITEAAYPYRAARGTCNVARAAQNSPVVVHIDGHQDVPANSEEDLARAVANQPVSVAVEASGKAFMFYSEGVFTGDCGTELDHGVAVVGYGVAEDGKAYWTVKNSWGPSWGEQGYIRVEKDSGASGGLCGIAMEASYPVKTYNKPMPRRALGAWESQ</sequence>
<protein>
    <recommendedName>
        <fullName evidence="12">Cysteine proteinase EP-B 1</fullName>
        <ecNumber evidence="4">3.4.22.-</ecNumber>
    </recommendedName>
</protein>
<name>CYSP1_HORVU</name>
<organism>
    <name type="scientific">Hordeum vulgare</name>
    <name type="common">Barley</name>
    <dbReference type="NCBI Taxonomy" id="4513"/>
    <lineage>
        <taxon>Eukaryota</taxon>
        <taxon>Viridiplantae</taxon>
        <taxon>Streptophyta</taxon>
        <taxon>Embryophyta</taxon>
        <taxon>Tracheophyta</taxon>
        <taxon>Spermatophyta</taxon>
        <taxon>Magnoliopsida</taxon>
        <taxon>Liliopsida</taxon>
        <taxon>Poales</taxon>
        <taxon>Poaceae</taxon>
        <taxon>BOP clade</taxon>
        <taxon>Pooideae</taxon>
        <taxon>Triticodae</taxon>
        <taxon>Triticeae</taxon>
        <taxon>Hordeinae</taxon>
        <taxon>Hordeum</taxon>
    </lineage>
</organism>
<comment type="induction">
    <text evidence="10 11">Synthesized by the aleurone cells stimulated by gibberellic acid (GA) (PubMed:2152126, PubMed:8756590). Repressed by abscisic acid (ABA) (PubMed:8756590).</text>
</comment>
<comment type="similarity">
    <text evidence="7 8 9">Belongs to the peptidase C1 family.</text>
</comment>